<feature type="chain" id="PRO_1000061007" description="Small ribosomal subunit protein uS9">
    <location>
        <begin position="1"/>
        <end position="134"/>
    </location>
</feature>
<feature type="region of interest" description="Disordered" evidence="2">
    <location>
        <begin position="109"/>
        <end position="134"/>
    </location>
</feature>
<feature type="compositionally biased region" description="Basic residues" evidence="2">
    <location>
        <begin position="118"/>
        <end position="134"/>
    </location>
</feature>
<evidence type="ECO:0000255" key="1">
    <source>
        <dbReference type="HAMAP-Rule" id="MF_00532"/>
    </source>
</evidence>
<evidence type="ECO:0000256" key="2">
    <source>
        <dbReference type="SAM" id="MobiDB-lite"/>
    </source>
</evidence>
<evidence type="ECO:0000305" key="3"/>
<reference key="1">
    <citation type="submission" date="2007-06" db="EMBL/GenBank/DDBJ databases">
        <title>Complete sequence of Methanococcus maripaludis C7.</title>
        <authorList>
            <consortium name="US DOE Joint Genome Institute"/>
            <person name="Copeland A."/>
            <person name="Lucas S."/>
            <person name="Lapidus A."/>
            <person name="Barry K."/>
            <person name="Glavina del Rio T."/>
            <person name="Dalin E."/>
            <person name="Tice H."/>
            <person name="Pitluck S."/>
            <person name="Clum A."/>
            <person name="Schmutz J."/>
            <person name="Larimer F."/>
            <person name="Land M."/>
            <person name="Hauser L."/>
            <person name="Kyrpides N."/>
            <person name="Anderson I."/>
            <person name="Sieprawska-Lupa M."/>
            <person name="Whitman W.B."/>
            <person name="Richardson P."/>
        </authorList>
    </citation>
    <scope>NUCLEOTIDE SEQUENCE [LARGE SCALE GENOMIC DNA]</scope>
    <source>
        <strain>C7 / ATCC BAA-1331</strain>
    </source>
</reference>
<protein>
    <recommendedName>
        <fullName evidence="1">Small ribosomal subunit protein uS9</fullName>
    </recommendedName>
    <alternativeName>
        <fullName evidence="3">30S ribosomal protein S9</fullName>
    </alternativeName>
</protein>
<name>RS9_METM7</name>
<proteinExistence type="inferred from homology"/>
<accession>A6VGR2</accession>
<sequence>MKVVHTVGKRRTAIARATAKEGSGKIRINKKPLELMEPKYIKMKLMEPVILAGEALSNIDVDIDVKGGGIVSQMDATRTALGKAIVEFTGKMELKEKFLSYDRTLLVSDARRTEPHKPSKSSKGPRAKRQKSYR</sequence>
<organism>
    <name type="scientific">Methanococcus maripaludis (strain C7 / ATCC BAA-1331)</name>
    <dbReference type="NCBI Taxonomy" id="426368"/>
    <lineage>
        <taxon>Archaea</taxon>
        <taxon>Methanobacteriati</taxon>
        <taxon>Methanobacteriota</taxon>
        <taxon>Methanomada group</taxon>
        <taxon>Methanococci</taxon>
        <taxon>Methanococcales</taxon>
        <taxon>Methanococcaceae</taxon>
        <taxon>Methanococcus</taxon>
    </lineage>
</organism>
<dbReference type="EMBL" id="CP000745">
    <property type="protein sequence ID" value="ABR65638.1"/>
    <property type="molecule type" value="Genomic_DNA"/>
</dbReference>
<dbReference type="SMR" id="A6VGR2"/>
<dbReference type="STRING" id="426368.MmarC7_0570"/>
<dbReference type="KEGG" id="mmz:MmarC7_0570"/>
<dbReference type="eggNOG" id="arCOG04243">
    <property type="taxonomic scope" value="Archaea"/>
</dbReference>
<dbReference type="HOGENOM" id="CLU_046483_4_0_2"/>
<dbReference type="OrthoDB" id="52677at2157"/>
<dbReference type="GO" id="GO:0022627">
    <property type="term" value="C:cytosolic small ribosomal subunit"/>
    <property type="evidence" value="ECO:0007669"/>
    <property type="project" value="TreeGrafter"/>
</dbReference>
<dbReference type="GO" id="GO:0003723">
    <property type="term" value="F:RNA binding"/>
    <property type="evidence" value="ECO:0007669"/>
    <property type="project" value="TreeGrafter"/>
</dbReference>
<dbReference type="GO" id="GO:0003735">
    <property type="term" value="F:structural constituent of ribosome"/>
    <property type="evidence" value="ECO:0007669"/>
    <property type="project" value="InterPro"/>
</dbReference>
<dbReference type="GO" id="GO:0000462">
    <property type="term" value="P:maturation of SSU-rRNA from tricistronic rRNA transcript (SSU-rRNA, 5.8S rRNA, LSU-rRNA)"/>
    <property type="evidence" value="ECO:0007669"/>
    <property type="project" value="TreeGrafter"/>
</dbReference>
<dbReference type="GO" id="GO:0006412">
    <property type="term" value="P:translation"/>
    <property type="evidence" value="ECO:0007669"/>
    <property type="project" value="UniProtKB-UniRule"/>
</dbReference>
<dbReference type="Gene3D" id="3.30.230.10">
    <property type="match status" value="1"/>
</dbReference>
<dbReference type="HAMAP" id="MF_00532_A">
    <property type="entry name" value="Ribosomal_uS9_A"/>
    <property type="match status" value="1"/>
</dbReference>
<dbReference type="InterPro" id="IPR020568">
    <property type="entry name" value="Ribosomal_Su5_D2-typ_SF"/>
</dbReference>
<dbReference type="InterPro" id="IPR000754">
    <property type="entry name" value="Ribosomal_uS9"/>
</dbReference>
<dbReference type="InterPro" id="IPR019958">
    <property type="entry name" value="Ribosomal_uS9_archaeal"/>
</dbReference>
<dbReference type="InterPro" id="IPR020574">
    <property type="entry name" value="Ribosomal_uS9_CS"/>
</dbReference>
<dbReference type="InterPro" id="IPR014721">
    <property type="entry name" value="Ribsml_uS5_D2-typ_fold_subgr"/>
</dbReference>
<dbReference type="NCBIfam" id="NF001749">
    <property type="entry name" value="PRK00474.1"/>
    <property type="match status" value="1"/>
</dbReference>
<dbReference type="NCBIfam" id="TIGR03627">
    <property type="entry name" value="uS9_arch"/>
    <property type="match status" value="1"/>
</dbReference>
<dbReference type="PANTHER" id="PTHR21569:SF16">
    <property type="entry name" value="RIBOSOMAL PROTEIN S16"/>
    <property type="match status" value="1"/>
</dbReference>
<dbReference type="PANTHER" id="PTHR21569">
    <property type="entry name" value="RIBOSOMAL PROTEIN S9"/>
    <property type="match status" value="1"/>
</dbReference>
<dbReference type="Pfam" id="PF00380">
    <property type="entry name" value="Ribosomal_S9"/>
    <property type="match status" value="1"/>
</dbReference>
<dbReference type="SUPFAM" id="SSF54211">
    <property type="entry name" value="Ribosomal protein S5 domain 2-like"/>
    <property type="match status" value="1"/>
</dbReference>
<dbReference type="PROSITE" id="PS00360">
    <property type="entry name" value="RIBOSOMAL_S9"/>
    <property type="match status" value="1"/>
</dbReference>
<keyword id="KW-0687">Ribonucleoprotein</keyword>
<keyword id="KW-0689">Ribosomal protein</keyword>
<gene>
    <name evidence="1" type="primary">rps9</name>
    <name type="ordered locus">MmarC7_0570</name>
</gene>
<comment type="similarity">
    <text evidence="1">Belongs to the universal ribosomal protein uS9 family.</text>
</comment>